<keyword id="KW-0328">Glycosyltransferase</keyword>
<keyword id="KW-0808">Transferase</keyword>
<sequence>MESSKVILYPSPGIGHLVSMVELGKLIHTHHPSLSVIILVLPATYETGSTTTYINTVSTTTPFITFHHLPVIPLPPDSSSEFIDLAFDIPQLYNPVVYNTLVAISETSTIKAVILDFFVNAAFQISKSLDLPTYYFFTSGASGLCAFLHLPTIYKTYSGNFKDLDTFINIPGVPPIHSSDMPTVLFDKESNSYKNFVKTSNNMAKSSGVIANSFLQLEERAAQTLRDGKSITDGPSPPIYLIGPLIASGNQVDHNENECLKWLNTQPSKSVVFLCFGSQGVFKKEQLKEIAVGLERSGQRFLWVVRKPPSDGGKEFGLDDVLPEGFVARTKEKGLVVKNWAPQPAILGHESVGGFVSHCGWNSSLEAVVFGVPMVAWPLYAEQKMNRVYLVEEIKVALWLRMSADGFVSAEAVEETVRQLMDGRRVRERILEMSTKAKAAVEDGGSSRVDFFKLTESWTHK</sequence>
<organism>
    <name type="scientific">Stevia rebaudiana</name>
    <name type="common">Stevia</name>
    <name type="synonym">Eupatorium rebaudianum</name>
    <dbReference type="NCBI Taxonomy" id="55670"/>
    <lineage>
        <taxon>Eukaryota</taxon>
        <taxon>Viridiplantae</taxon>
        <taxon>Streptophyta</taxon>
        <taxon>Embryophyta</taxon>
        <taxon>Tracheophyta</taxon>
        <taxon>Spermatophyta</taxon>
        <taxon>Magnoliopsida</taxon>
        <taxon>eudicotyledons</taxon>
        <taxon>Gunneridae</taxon>
        <taxon>Pentapetalae</taxon>
        <taxon>asterids</taxon>
        <taxon>campanulids</taxon>
        <taxon>Asterales</taxon>
        <taxon>Asteraceae</taxon>
        <taxon>Asteroideae</taxon>
        <taxon>Heliantheae alliance</taxon>
        <taxon>Eupatorieae</taxon>
        <taxon>Stevia</taxon>
    </lineage>
</organism>
<accession>Q6VAA7</accession>
<dbReference type="EC" id="2.4.1.-" evidence="4"/>
<dbReference type="EMBL" id="AY345981">
    <property type="protein sequence ID" value="AAR06919.1"/>
    <property type="molecule type" value="mRNA"/>
</dbReference>
<dbReference type="SMR" id="Q6VAA7"/>
<dbReference type="CAZy" id="GT1">
    <property type="family name" value="Glycosyltransferase Family 1"/>
</dbReference>
<dbReference type="GO" id="GO:0035251">
    <property type="term" value="F:UDP-glucosyltransferase activity"/>
    <property type="evidence" value="ECO:0007669"/>
    <property type="project" value="InterPro"/>
</dbReference>
<dbReference type="CDD" id="cd03784">
    <property type="entry name" value="GT1_Gtf-like"/>
    <property type="match status" value="1"/>
</dbReference>
<dbReference type="FunFam" id="3.40.50.2000:FF:000020">
    <property type="entry name" value="Glycosyltransferase"/>
    <property type="match status" value="1"/>
</dbReference>
<dbReference type="FunFam" id="3.40.50.2000:FF:000095">
    <property type="entry name" value="Glycosyltransferase"/>
    <property type="match status" value="1"/>
</dbReference>
<dbReference type="Gene3D" id="3.40.50.2000">
    <property type="entry name" value="Glycogen Phosphorylase B"/>
    <property type="match status" value="2"/>
</dbReference>
<dbReference type="InterPro" id="IPR050481">
    <property type="entry name" value="UDP-glycosyltransf_plant"/>
</dbReference>
<dbReference type="InterPro" id="IPR002213">
    <property type="entry name" value="UDP_glucos_trans"/>
</dbReference>
<dbReference type="InterPro" id="IPR035595">
    <property type="entry name" value="UDP_glycos_trans_CS"/>
</dbReference>
<dbReference type="PANTHER" id="PTHR48048">
    <property type="entry name" value="GLYCOSYLTRANSFERASE"/>
    <property type="match status" value="1"/>
</dbReference>
<dbReference type="PANTHER" id="PTHR48048:SF70">
    <property type="entry name" value="ISOFLAVONE 7-O-GLUCOSYLTRANSFERASE"/>
    <property type="match status" value="1"/>
</dbReference>
<dbReference type="Pfam" id="PF00201">
    <property type="entry name" value="UDPGT"/>
    <property type="match status" value="1"/>
</dbReference>
<dbReference type="SUPFAM" id="SSF53756">
    <property type="entry name" value="UDP-Glycosyltransferase/glycogen phosphorylase"/>
    <property type="match status" value="1"/>
</dbReference>
<dbReference type="PROSITE" id="PS00375">
    <property type="entry name" value="UDPGT"/>
    <property type="match status" value="1"/>
</dbReference>
<name>U88B1_STERE</name>
<evidence type="ECO:0000250" key="1">
    <source>
        <dbReference type="UniProtKB" id="Q6VAA6"/>
    </source>
</evidence>
<evidence type="ECO:0000250" key="2">
    <source>
        <dbReference type="UniProtKB" id="Q9M156"/>
    </source>
</evidence>
<evidence type="ECO:0000303" key="3">
    <source>
    </source>
</evidence>
<evidence type="ECO:0000305" key="4"/>
<comment type="function">
    <text evidence="1">May glycosylate diterpenes or flavonols in leaves.</text>
</comment>
<comment type="similarity">
    <text evidence="4">Belongs to the UDP-glycosyltransferase family.</text>
</comment>
<gene>
    <name evidence="3" type="primary">UGT88B1</name>
</gene>
<proteinExistence type="evidence at transcript level"/>
<protein>
    <recommendedName>
        <fullName evidence="3">UDP-glycosyltransferase 88B1</fullName>
        <ecNumber evidence="4">2.4.1.-</ecNumber>
    </recommendedName>
</protein>
<feature type="chain" id="PRO_0000434471" description="UDP-glycosyltransferase 88B1">
    <location>
        <begin position="1"/>
        <end position="461"/>
    </location>
</feature>
<feature type="binding site" evidence="2">
    <location>
        <position position="278"/>
    </location>
    <ligand>
        <name>UDP-alpha-D-glucose</name>
        <dbReference type="ChEBI" id="CHEBI:58885"/>
    </ligand>
</feature>
<feature type="binding site" evidence="2">
    <location>
        <begin position="340"/>
        <end position="341"/>
    </location>
    <ligand>
        <name>UDP-alpha-D-glucose</name>
        <dbReference type="ChEBI" id="CHEBI:58885"/>
    </ligand>
</feature>
<feature type="binding site" evidence="2">
    <location>
        <begin position="358"/>
        <end position="366"/>
    </location>
    <ligand>
        <name>UDP-alpha-D-glucose</name>
        <dbReference type="ChEBI" id="CHEBI:58885"/>
    </ligand>
</feature>
<feature type="binding site" evidence="2">
    <location>
        <begin position="380"/>
        <end position="383"/>
    </location>
    <ligand>
        <name>UDP-alpha-D-glucose</name>
        <dbReference type="ChEBI" id="CHEBI:58885"/>
    </ligand>
</feature>
<reference key="1">
    <citation type="journal article" date="2005" name="Plant J.">
        <title>Functional genomics uncovers three glucosyltransferases involved in the synthesis of the major sweet glucosides of Stevia rebaudiana.</title>
        <authorList>
            <person name="Richman A."/>
            <person name="Swanson A."/>
            <person name="Humphrey T."/>
            <person name="Chapman R."/>
            <person name="McGarvey B."/>
            <person name="Pocs R."/>
            <person name="Brandle J."/>
        </authorList>
    </citation>
    <scope>NUCLEOTIDE SEQUENCE [MRNA]</scope>
    <source>
        <tissue>Leaf</tissue>
    </source>
</reference>